<accession>Q5HB80</accession>
<accession>Q5FEK0</accession>
<feature type="chain" id="PRO_0000263272" description="Peptide chain release factor 1">
    <location>
        <begin position="1"/>
        <end position="359"/>
    </location>
</feature>
<feature type="modified residue" description="N5-methylglutamine" evidence="1">
    <location>
        <position position="235"/>
    </location>
</feature>
<evidence type="ECO:0000255" key="1">
    <source>
        <dbReference type="HAMAP-Rule" id="MF_00093"/>
    </source>
</evidence>
<organism>
    <name type="scientific">Ehrlichia ruminantium (strain Welgevonden)</name>
    <dbReference type="NCBI Taxonomy" id="254945"/>
    <lineage>
        <taxon>Bacteria</taxon>
        <taxon>Pseudomonadati</taxon>
        <taxon>Pseudomonadota</taxon>
        <taxon>Alphaproteobacteria</taxon>
        <taxon>Rickettsiales</taxon>
        <taxon>Anaplasmataceae</taxon>
        <taxon>Ehrlichia</taxon>
    </lineage>
</organism>
<proteinExistence type="inferred from homology"/>
<keyword id="KW-0963">Cytoplasm</keyword>
<keyword id="KW-0488">Methylation</keyword>
<keyword id="KW-0648">Protein biosynthesis</keyword>
<dbReference type="EMBL" id="CR767821">
    <property type="protein sequence ID" value="CAH58178.1"/>
    <property type="molecule type" value="Genomic_DNA"/>
</dbReference>
<dbReference type="EMBL" id="CR925678">
    <property type="protein sequence ID" value="CAI26966.1"/>
    <property type="molecule type" value="Genomic_DNA"/>
</dbReference>
<dbReference type="RefSeq" id="WP_011155131.1">
    <property type="nucleotide sequence ID" value="NC_005295.2"/>
</dbReference>
<dbReference type="SMR" id="Q5HB80"/>
<dbReference type="GeneID" id="33057789"/>
<dbReference type="KEGG" id="eru:Erum4500"/>
<dbReference type="KEGG" id="erw:ERWE_CDS_04720"/>
<dbReference type="eggNOG" id="COG0216">
    <property type="taxonomic scope" value="Bacteria"/>
</dbReference>
<dbReference type="HOGENOM" id="CLU_036856_0_1_5"/>
<dbReference type="Proteomes" id="UP000001021">
    <property type="component" value="Chromosome"/>
</dbReference>
<dbReference type="GO" id="GO:0005737">
    <property type="term" value="C:cytoplasm"/>
    <property type="evidence" value="ECO:0007669"/>
    <property type="project" value="UniProtKB-SubCell"/>
</dbReference>
<dbReference type="GO" id="GO:0016149">
    <property type="term" value="F:translation release factor activity, codon specific"/>
    <property type="evidence" value="ECO:0007669"/>
    <property type="project" value="UniProtKB-UniRule"/>
</dbReference>
<dbReference type="FunFam" id="3.30.160.20:FF:000004">
    <property type="entry name" value="Peptide chain release factor 1"/>
    <property type="match status" value="1"/>
</dbReference>
<dbReference type="FunFam" id="3.30.70.1660:FF:000002">
    <property type="entry name" value="Peptide chain release factor 1"/>
    <property type="match status" value="1"/>
</dbReference>
<dbReference type="FunFam" id="3.30.70.1660:FF:000004">
    <property type="entry name" value="Peptide chain release factor 1"/>
    <property type="match status" value="1"/>
</dbReference>
<dbReference type="Gene3D" id="3.30.160.20">
    <property type="match status" value="1"/>
</dbReference>
<dbReference type="Gene3D" id="3.30.70.1660">
    <property type="match status" value="1"/>
</dbReference>
<dbReference type="Gene3D" id="6.10.140.1950">
    <property type="match status" value="1"/>
</dbReference>
<dbReference type="HAMAP" id="MF_00093">
    <property type="entry name" value="Rel_fac_1"/>
    <property type="match status" value="1"/>
</dbReference>
<dbReference type="InterPro" id="IPR005139">
    <property type="entry name" value="PCRF"/>
</dbReference>
<dbReference type="InterPro" id="IPR000352">
    <property type="entry name" value="Pep_chain_release_fac_I"/>
</dbReference>
<dbReference type="InterPro" id="IPR045853">
    <property type="entry name" value="Pep_chain_release_fac_I_sf"/>
</dbReference>
<dbReference type="InterPro" id="IPR050057">
    <property type="entry name" value="Prokaryotic/Mito_RF"/>
</dbReference>
<dbReference type="InterPro" id="IPR004373">
    <property type="entry name" value="RF-1"/>
</dbReference>
<dbReference type="NCBIfam" id="TIGR00019">
    <property type="entry name" value="prfA"/>
    <property type="match status" value="1"/>
</dbReference>
<dbReference type="NCBIfam" id="NF001859">
    <property type="entry name" value="PRK00591.1"/>
    <property type="match status" value="1"/>
</dbReference>
<dbReference type="PANTHER" id="PTHR43804">
    <property type="entry name" value="LD18447P"/>
    <property type="match status" value="1"/>
</dbReference>
<dbReference type="PANTHER" id="PTHR43804:SF7">
    <property type="entry name" value="LD18447P"/>
    <property type="match status" value="1"/>
</dbReference>
<dbReference type="Pfam" id="PF03462">
    <property type="entry name" value="PCRF"/>
    <property type="match status" value="1"/>
</dbReference>
<dbReference type="Pfam" id="PF00472">
    <property type="entry name" value="RF-1"/>
    <property type="match status" value="1"/>
</dbReference>
<dbReference type="SMART" id="SM00937">
    <property type="entry name" value="PCRF"/>
    <property type="match status" value="1"/>
</dbReference>
<dbReference type="SUPFAM" id="SSF75620">
    <property type="entry name" value="Release factor"/>
    <property type="match status" value="1"/>
</dbReference>
<dbReference type="PROSITE" id="PS00745">
    <property type="entry name" value="RF_PROK_I"/>
    <property type="match status" value="1"/>
</dbReference>
<reference key="1">
    <citation type="journal article" date="2005" name="Proc. Natl. Acad. Sci. U.S.A.">
        <title>The genome of the heartwater agent Ehrlichia ruminantium contains multiple tandem repeats of actively variable copy number.</title>
        <authorList>
            <person name="Collins N.E."/>
            <person name="Liebenberg J."/>
            <person name="de Villiers E.P."/>
            <person name="Brayton K.A."/>
            <person name="Louw E."/>
            <person name="Pretorius A."/>
            <person name="Faber F.E."/>
            <person name="van Heerden H."/>
            <person name="Josemans A."/>
            <person name="van Kleef M."/>
            <person name="Steyn H.C."/>
            <person name="van Strijp M.F."/>
            <person name="Zweygarth E."/>
            <person name="Jongejan F."/>
            <person name="Maillard J.C."/>
            <person name="Berthier D."/>
            <person name="Botha M."/>
            <person name="Joubert F."/>
            <person name="Corton C.H."/>
            <person name="Thomson N.R."/>
            <person name="Allsopp M.T."/>
            <person name="Allsopp B.A."/>
        </authorList>
    </citation>
    <scope>NUCLEOTIDE SEQUENCE [LARGE SCALE GENOMIC DNA]</scope>
    <source>
        <strain>Welgevonden</strain>
    </source>
</reference>
<reference key="2">
    <citation type="journal article" date="2006" name="J. Bacteriol.">
        <title>Comparative genomic analysis of three strains of Ehrlichia ruminantium reveals an active process of genome size plasticity.</title>
        <authorList>
            <person name="Frutos R."/>
            <person name="Viari A."/>
            <person name="Ferraz C."/>
            <person name="Morgat A."/>
            <person name="Eychenie S."/>
            <person name="Kandassamy Y."/>
            <person name="Chantal I."/>
            <person name="Bensaid A."/>
            <person name="Coissac E."/>
            <person name="Vachiery N."/>
            <person name="Demaille J."/>
            <person name="Martinez D."/>
        </authorList>
    </citation>
    <scope>NUCLEOTIDE SEQUENCE [LARGE SCALE GENOMIC DNA]</scope>
    <source>
        <strain>Welgevonden</strain>
    </source>
</reference>
<name>RF1_EHRRW</name>
<comment type="function">
    <text evidence="1">Peptide chain release factor 1 directs the termination of translation in response to the peptide chain termination codons UAG and UAA.</text>
</comment>
<comment type="subcellular location">
    <subcellularLocation>
        <location evidence="1">Cytoplasm</location>
    </subcellularLocation>
</comment>
<comment type="PTM">
    <text evidence="1">Methylated by PrmC. Methylation increases the termination efficiency of RF1.</text>
</comment>
<comment type="similarity">
    <text evidence="1">Belongs to the prokaryotic/mitochondrial release factor family.</text>
</comment>
<protein>
    <recommendedName>
        <fullName evidence="1">Peptide chain release factor 1</fullName>
        <shortName evidence="1">RF-1</shortName>
    </recommendedName>
</protein>
<gene>
    <name evidence="1" type="primary">prfA</name>
    <name type="ordered locus">Erum4500</name>
    <name type="ordered locus">ERWE_CDS_04720</name>
</gene>
<sequence>MSFDSGLEELSEKFYKLKHLLEDPSQLSVESFVNASKEYSELLPIISVIDEYNAVQKDIKDLQELINNQETDTELKNLAKEEFYELQKQLPKVKHKLKLSLLPKDKDDARNAILEIRAGTGGEEAALFVTDLYRMYIKYAEKKNWKIEQINSSSTGIGGHKEVSLCVSGSNVFAKLKFESGVHRVQRVPETEASGRLHTSAATVAVLPEIEEVDLKIDEKDLRIDVYRSSGPGGQSVNTTDSAVRITHIPSGIVVIQQDEKSQHKNKNKALKVLRARLYDLEKQKRDAEISQLRKSQIGSGDRSERIRTYNFPQSRITDHRINLTLYRLEDIMKEGDLDELIEALIAEDEANKLKNLNI</sequence>